<evidence type="ECO:0000255" key="1">
    <source>
        <dbReference type="HAMAP-Rule" id="MF_00184"/>
    </source>
</evidence>
<evidence type="ECO:0000255" key="2">
    <source>
        <dbReference type="PROSITE-ProRule" id="PRU01228"/>
    </source>
</evidence>
<organism>
    <name type="scientific">Variovorax paradoxus (strain S110)</name>
    <dbReference type="NCBI Taxonomy" id="543728"/>
    <lineage>
        <taxon>Bacteria</taxon>
        <taxon>Pseudomonadati</taxon>
        <taxon>Pseudomonadota</taxon>
        <taxon>Betaproteobacteria</taxon>
        <taxon>Burkholderiales</taxon>
        <taxon>Comamonadaceae</taxon>
        <taxon>Variovorax</taxon>
    </lineage>
</organism>
<name>SYT_VARPS</name>
<reference key="1">
    <citation type="journal article" date="2011" name="J. Bacteriol.">
        <title>Complete genome sequence of the metabolically versatile plant growth-promoting endophyte, Variovorax paradoxus S110.</title>
        <authorList>
            <person name="Han J.I."/>
            <person name="Choi H.K."/>
            <person name="Lee S.W."/>
            <person name="Orwin P.M."/>
            <person name="Kim J."/>
            <person name="Laroe S.L."/>
            <person name="Kim T.G."/>
            <person name="O'Neil J."/>
            <person name="Leadbetter J.R."/>
            <person name="Lee S.Y."/>
            <person name="Hur C.G."/>
            <person name="Spain J.C."/>
            <person name="Ovchinnikova G."/>
            <person name="Goodwin L."/>
            <person name="Han C."/>
        </authorList>
    </citation>
    <scope>NUCLEOTIDE SEQUENCE [LARGE SCALE GENOMIC DNA]</scope>
    <source>
        <strain>S110</strain>
    </source>
</reference>
<protein>
    <recommendedName>
        <fullName evidence="1">Threonine--tRNA ligase</fullName>
        <ecNumber evidence="1">6.1.1.3</ecNumber>
    </recommendedName>
    <alternativeName>
        <fullName evidence="1">Threonyl-tRNA synthetase</fullName>
        <shortName evidence="1">ThrRS</shortName>
    </alternativeName>
</protein>
<gene>
    <name evidence="1" type="primary">thrS</name>
    <name type="ordered locus">Vapar_1870</name>
</gene>
<comment type="function">
    <text evidence="1">Catalyzes the attachment of threonine to tRNA(Thr) in a two-step reaction: L-threonine is first activated by ATP to form Thr-AMP and then transferred to the acceptor end of tRNA(Thr). Also edits incorrectly charged L-seryl-tRNA(Thr).</text>
</comment>
<comment type="catalytic activity">
    <reaction evidence="1">
        <text>tRNA(Thr) + L-threonine + ATP = L-threonyl-tRNA(Thr) + AMP + diphosphate + H(+)</text>
        <dbReference type="Rhea" id="RHEA:24624"/>
        <dbReference type="Rhea" id="RHEA-COMP:9670"/>
        <dbReference type="Rhea" id="RHEA-COMP:9704"/>
        <dbReference type="ChEBI" id="CHEBI:15378"/>
        <dbReference type="ChEBI" id="CHEBI:30616"/>
        <dbReference type="ChEBI" id="CHEBI:33019"/>
        <dbReference type="ChEBI" id="CHEBI:57926"/>
        <dbReference type="ChEBI" id="CHEBI:78442"/>
        <dbReference type="ChEBI" id="CHEBI:78534"/>
        <dbReference type="ChEBI" id="CHEBI:456215"/>
        <dbReference type="EC" id="6.1.1.3"/>
    </reaction>
</comment>
<comment type="cofactor">
    <cofactor evidence="1">
        <name>Zn(2+)</name>
        <dbReference type="ChEBI" id="CHEBI:29105"/>
    </cofactor>
    <text evidence="1">Binds 1 zinc ion per subunit.</text>
</comment>
<comment type="subunit">
    <text evidence="1">Homodimer.</text>
</comment>
<comment type="subcellular location">
    <subcellularLocation>
        <location evidence="1">Cytoplasm</location>
    </subcellularLocation>
</comment>
<comment type="similarity">
    <text evidence="1">Belongs to the class-II aminoacyl-tRNA synthetase family.</text>
</comment>
<keyword id="KW-0030">Aminoacyl-tRNA synthetase</keyword>
<keyword id="KW-0067">ATP-binding</keyword>
<keyword id="KW-0963">Cytoplasm</keyword>
<keyword id="KW-0436">Ligase</keyword>
<keyword id="KW-0479">Metal-binding</keyword>
<keyword id="KW-0547">Nucleotide-binding</keyword>
<keyword id="KW-0648">Protein biosynthesis</keyword>
<keyword id="KW-0694">RNA-binding</keyword>
<keyword id="KW-0820">tRNA-binding</keyword>
<keyword id="KW-0862">Zinc</keyword>
<dbReference type="EC" id="6.1.1.3" evidence="1"/>
<dbReference type="EMBL" id="CP001635">
    <property type="protein sequence ID" value="ACS18520.1"/>
    <property type="molecule type" value="Genomic_DNA"/>
</dbReference>
<dbReference type="SMR" id="C5CUU2"/>
<dbReference type="STRING" id="543728.Vapar_1870"/>
<dbReference type="KEGG" id="vap:Vapar_1870"/>
<dbReference type="eggNOG" id="COG0441">
    <property type="taxonomic scope" value="Bacteria"/>
</dbReference>
<dbReference type="HOGENOM" id="CLU_008554_0_1_4"/>
<dbReference type="OrthoDB" id="9802304at2"/>
<dbReference type="GO" id="GO:0005829">
    <property type="term" value="C:cytosol"/>
    <property type="evidence" value="ECO:0007669"/>
    <property type="project" value="TreeGrafter"/>
</dbReference>
<dbReference type="GO" id="GO:0005524">
    <property type="term" value="F:ATP binding"/>
    <property type="evidence" value="ECO:0007669"/>
    <property type="project" value="UniProtKB-UniRule"/>
</dbReference>
<dbReference type="GO" id="GO:0046872">
    <property type="term" value="F:metal ion binding"/>
    <property type="evidence" value="ECO:0007669"/>
    <property type="project" value="UniProtKB-KW"/>
</dbReference>
<dbReference type="GO" id="GO:0004829">
    <property type="term" value="F:threonine-tRNA ligase activity"/>
    <property type="evidence" value="ECO:0007669"/>
    <property type="project" value="UniProtKB-UniRule"/>
</dbReference>
<dbReference type="GO" id="GO:0000049">
    <property type="term" value="F:tRNA binding"/>
    <property type="evidence" value="ECO:0007669"/>
    <property type="project" value="UniProtKB-KW"/>
</dbReference>
<dbReference type="GO" id="GO:0006435">
    <property type="term" value="P:threonyl-tRNA aminoacylation"/>
    <property type="evidence" value="ECO:0007669"/>
    <property type="project" value="UniProtKB-UniRule"/>
</dbReference>
<dbReference type="CDD" id="cd01667">
    <property type="entry name" value="TGS_ThrRS"/>
    <property type="match status" value="1"/>
</dbReference>
<dbReference type="CDD" id="cd00860">
    <property type="entry name" value="ThrRS_anticodon"/>
    <property type="match status" value="1"/>
</dbReference>
<dbReference type="CDD" id="cd00771">
    <property type="entry name" value="ThrRS_core"/>
    <property type="match status" value="1"/>
</dbReference>
<dbReference type="FunFam" id="3.10.20.30:FF:000005">
    <property type="entry name" value="Threonine--tRNA ligase"/>
    <property type="match status" value="1"/>
</dbReference>
<dbReference type="FunFam" id="3.30.54.20:FF:000002">
    <property type="entry name" value="Threonine--tRNA ligase"/>
    <property type="match status" value="1"/>
</dbReference>
<dbReference type="FunFam" id="3.30.930.10:FF:000002">
    <property type="entry name" value="Threonine--tRNA ligase"/>
    <property type="match status" value="1"/>
</dbReference>
<dbReference type="FunFam" id="3.40.50.800:FF:000001">
    <property type="entry name" value="Threonine--tRNA ligase"/>
    <property type="match status" value="1"/>
</dbReference>
<dbReference type="FunFam" id="3.30.980.10:FF:000005">
    <property type="entry name" value="Threonyl-tRNA synthetase, mitochondrial"/>
    <property type="match status" value="1"/>
</dbReference>
<dbReference type="Gene3D" id="3.10.20.30">
    <property type="match status" value="1"/>
</dbReference>
<dbReference type="Gene3D" id="3.30.54.20">
    <property type="match status" value="1"/>
</dbReference>
<dbReference type="Gene3D" id="3.40.50.800">
    <property type="entry name" value="Anticodon-binding domain"/>
    <property type="match status" value="1"/>
</dbReference>
<dbReference type="Gene3D" id="3.30.930.10">
    <property type="entry name" value="Bira Bifunctional Protein, Domain 2"/>
    <property type="match status" value="1"/>
</dbReference>
<dbReference type="Gene3D" id="3.30.980.10">
    <property type="entry name" value="Threonyl-trna Synthetase, Chain A, domain 2"/>
    <property type="match status" value="1"/>
</dbReference>
<dbReference type="HAMAP" id="MF_00184">
    <property type="entry name" value="Thr_tRNA_synth"/>
    <property type="match status" value="1"/>
</dbReference>
<dbReference type="InterPro" id="IPR002314">
    <property type="entry name" value="aa-tRNA-synt_IIb"/>
</dbReference>
<dbReference type="InterPro" id="IPR006195">
    <property type="entry name" value="aa-tRNA-synth_II"/>
</dbReference>
<dbReference type="InterPro" id="IPR045864">
    <property type="entry name" value="aa-tRNA-synth_II/BPL/LPL"/>
</dbReference>
<dbReference type="InterPro" id="IPR004154">
    <property type="entry name" value="Anticodon-bd"/>
</dbReference>
<dbReference type="InterPro" id="IPR036621">
    <property type="entry name" value="Anticodon-bd_dom_sf"/>
</dbReference>
<dbReference type="InterPro" id="IPR012675">
    <property type="entry name" value="Beta-grasp_dom_sf"/>
</dbReference>
<dbReference type="InterPro" id="IPR004095">
    <property type="entry name" value="TGS"/>
</dbReference>
<dbReference type="InterPro" id="IPR012676">
    <property type="entry name" value="TGS-like"/>
</dbReference>
<dbReference type="InterPro" id="IPR002320">
    <property type="entry name" value="Thr-tRNA-ligase_IIa"/>
</dbReference>
<dbReference type="InterPro" id="IPR018163">
    <property type="entry name" value="Thr/Ala-tRNA-synth_IIc_edit"/>
</dbReference>
<dbReference type="InterPro" id="IPR047246">
    <property type="entry name" value="ThrRS_anticodon"/>
</dbReference>
<dbReference type="InterPro" id="IPR033728">
    <property type="entry name" value="ThrRS_core"/>
</dbReference>
<dbReference type="InterPro" id="IPR012947">
    <property type="entry name" value="tRNA_SAD"/>
</dbReference>
<dbReference type="NCBIfam" id="TIGR00418">
    <property type="entry name" value="thrS"/>
    <property type="match status" value="1"/>
</dbReference>
<dbReference type="PANTHER" id="PTHR11451:SF44">
    <property type="entry name" value="THREONINE--TRNA LIGASE, CHLOROPLASTIC_MITOCHONDRIAL 2"/>
    <property type="match status" value="1"/>
</dbReference>
<dbReference type="PANTHER" id="PTHR11451">
    <property type="entry name" value="THREONINE-TRNA LIGASE"/>
    <property type="match status" value="1"/>
</dbReference>
<dbReference type="Pfam" id="PF03129">
    <property type="entry name" value="HGTP_anticodon"/>
    <property type="match status" value="1"/>
</dbReference>
<dbReference type="Pfam" id="PF02824">
    <property type="entry name" value="TGS"/>
    <property type="match status" value="1"/>
</dbReference>
<dbReference type="Pfam" id="PF00587">
    <property type="entry name" value="tRNA-synt_2b"/>
    <property type="match status" value="1"/>
</dbReference>
<dbReference type="Pfam" id="PF07973">
    <property type="entry name" value="tRNA_SAD"/>
    <property type="match status" value="1"/>
</dbReference>
<dbReference type="PRINTS" id="PR01047">
    <property type="entry name" value="TRNASYNTHTHR"/>
</dbReference>
<dbReference type="SMART" id="SM00863">
    <property type="entry name" value="tRNA_SAD"/>
    <property type="match status" value="1"/>
</dbReference>
<dbReference type="SUPFAM" id="SSF52954">
    <property type="entry name" value="Class II aaRS ABD-related"/>
    <property type="match status" value="1"/>
</dbReference>
<dbReference type="SUPFAM" id="SSF55681">
    <property type="entry name" value="Class II aaRS and biotin synthetases"/>
    <property type="match status" value="1"/>
</dbReference>
<dbReference type="SUPFAM" id="SSF81271">
    <property type="entry name" value="TGS-like"/>
    <property type="match status" value="1"/>
</dbReference>
<dbReference type="SUPFAM" id="SSF55186">
    <property type="entry name" value="ThrRS/AlaRS common domain"/>
    <property type="match status" value="1"/>
</dbReference>
<dbReference type="PROSITE" id="PS50862">
    <property type="entry name" value="AA_TRNA_LIGASE_II"/>
    <property type="match status" value="1"/>
</dbReference>
<dbReference type="PROSITE" id="PS51880">
    <property type="entry name" value="TGS"/>
    <property type="match status" value="1"/>
</dbReference>
<accession>C5CUU2</accession>
<feature type="chain" id="PRO_1000203931" description="Threonine--tRNA ligase">
    <location>
        <begin position="1"/>
        <end position="635"/>
    </location>
</feature>
<feature type="domain" description="TGS" evidence="2">
    <location>
        <begin position="1"/>
        <end position="61"/>
    </location>
</feature>
<feature type="region of interest" description="Catalytic" evidence="1">
    <location>
        <begin position="242"/>
        <end position="533"/>
    </location>
</feature>
<feature type="binding site" evidence="1">
    <location>
        <position position="333"/>
    </location>
    <ligand>
        <name>Zn(2+)</name>
        <dbReference type="ChEBI" id="CHEBI:29105"/>
    </ligand>
</feature>
<feature type="binding site" evidence="1">
    <location>
        <position position="384"/>
    </location>
    <ligand>
        <name>Zn(2+)</name>
        <dbReference type="ChEBI" id="CHEBI:29105"/>
    </ligand>
</feature>
<feature type="binding site" evidence="1">
    <location>
        <position position="510"/>
    </location>
    <ligand>
        <name>Zn(2+)</name>
        <dbReference type="ChEBI" id="CHEBI:29105"/>
    </ligand>
</feature>
<sequence>MIQITLPDNSRREFPGPVSVAEVAQSIGPGLAKMTVAGKVDGKLVDASDVIDHDARLQIITPRDDEGLEIIRHSTAHLVGHAVKQLYPTAKMVIGPVIEEGFYYDISYERPFTPEDMAAIEARMRELIAQDYDVVKKMTPRAEVIEVFKSRGEDYKLRLVEDMPDEQAMGLYYHQEYVDMCRGPHVPNTRFLKVFKLTKLAGAYWRGDAKNEQLQRIYGTAWADKKQLDQYIQRIEEAEKRDHRKLGKELDLFHIDEVAPGVVFWHPKGWALWQAVEQYMRGIYRDTGYWEVKGPQILDKSLWEKTGHWQNYRDNMFTTESEKREYALKPMNCPGHVLIFKSDLRSYRDLPLRYGEFGQCHRNEPSGALHGIMRVRGFTQDDGHIFCTEDQILEECVAYTAQLQKVYADFGFTEILYKVATRPDNRVGSDELWDKAEHAVMEALRRSGVDFIISPGDGAFYGPKIEYTLKDALGRQWQCGTMQVDFNTAERLGGEYVTETSGRAHPVMLHRAIVGSLERFIGMLIEHHAGALPAWLAPVQVAVLNISEGQADYAASVAKTLQNQGLRVQLDLHNEKITYKIRKHSLQKLPYILVVGDKEREAGAVAVRARGNQDLGAMSLESFVQRLVQDVADKR</sequence>
<proteinExistence type="inferred from homology"/>